<reference key="1">
    <citation type="journal article" date="2009" name="Science">
        <title>The dynamics and time scale of ongoing genomic erosion in symbiotic bacteria.</title>
        <authorList>
            <person name="Moran N.A."/>
            <person name="McLaughlin H.J."/>
            <person name="Sorek R."/>
        </authorList>
    </citation>
    <scope>NUCLEOTIDE SEQUENCE [LARGE SCALE GENOMIC DNA]</scope>
    <source>
        <strain>5A</strain>
    </source>
</reference>
<dbReference type="EC" id="4.6.1.12" evidence="1"/>
<dbReference type="EMBL" id="CP001161">
    <property type="protein sequence ID" value="ACL30768.1"/>
    <property type="molecule type" value="Genomic_DNA"/>
</dbReference>
<dbReference type="RefSeq" id="WP_009874372.1">
    <property type="nucleotide sequence ID" value="NC_011833.1"/>
</dbReference>
<dbReference type="SMR" id="B8D9J7"/>
<dbReference type="KEGG" id="bap:BUAP5A_412"/>
<dbReference type="HOGENOM" id="CLU_084630_2_0_6"/>
<dbReference type="OrthoDB" id="9804336at2"/>
<dbReference type="UniPathway" id="UPA00056">
    <property type="reaction ID" value="UER00095"/>
</dbReference>
<dbReference type="Proteomes" id="UP000006904">
    <property type="component" value="Chromosome"/>
</dbReference>
<dbReference type="GO" id="GO:0008685">
    <property type="term" value="F:2-C-methyl-D-erythritol 2,4-cyclodiphosphate synthase activity"/>
    <property type="evidence" value="ECO:0007669"/>
    <property type="project" value="UniProtKB-UniRule"/>
</dbReference>
<dbReference type="GO" id="GO:0046872">
    <property type="term" value="F:metal ion binding"/>
    <property type="evidence" value="ECO:0007669"/>
    <property type="project" value="UniProtKB-KW"/>
</dbReference>
<dbReference type="GO" id="GO:0019288">
    <property type="term" value="P:isopentenyl diphosphate biosynthetic process, methylerythritol 4-phosphate pathway"/>
    <property type="evidence" value="ECO:0007669"/>
    <property type="project" value="UniProtKB-UniRule"/>
</dbReference>
<dbReference type="GO" id="GO:0016114">
    <property type="term" value="P:terpenoid biosynthetic process"/>
    <property type="evidence" value="ECO:0007669"/>
    <property type="project" value="InterPro"/>
</dbReference>
<dbReference type="CDD" id="cd00554">
    <property type="entry name" value="MECDP_synthase"/>
    <property type="match status" value="1"/>
</dbReference>
<dbReference type="Gene3D" id="3.30.1330.50">
    <property type="entry name" value="2-C-methyl-D-erythritol 2,4-cyclodiphosphate synthase"/>
    <property type="match status" value="1"/>
</dbReference>
<dbReference type="HAMAP" id="MF_00107">
    <property type="entry name" value="IspF"/>
    <property type="match status" value="1"/>
</dbReference>
<dbReference type="InterPro" id="IPR003526">
    <property type="entry name" value="MECDP_synthase"/>
</dbReference>
<dbReference type="InterPro" id="IPR020555">
    <property type="entry name" value="MECDP_synthase_CS"/>
</dbReference>
<dbReference type="InterPro" id="IPR036571">
    <property type="entry name" value="MECDP_synthase_sf"/>
</dbReference>
<dbReference type="NCBIfam" id="TIGR00151">
    <property type="entry name" value="ispF"/>
    <property type="match status" value="1"/>
</dbReference>
<dbReference type="PANTHER" id="PTHR43181">
    <property type="entry name" value="2-C-METHYL-D-ERYTHRITOL 2,4-CYCLODIPHOSPHATE SYNTHASE, CHLOROPLASTIC"/>
    <property type="match status" value="1"/>
</dbReference>
<dbReference type="PANTHER" id="PTHR43181:SF1">
    <property type="entry name" value="2-C-METHYL-D-ERYTHRITOL 2,4-CYCLODIPHOSPHATE SYNTHASE, CHLOROPLASTIC"/>
    <property type="match status" value="1"/>
</dbReference>
<dbReference type="Pfam" id="PF02542">
    <property type="entry name" value="YgbB"/>
    <property type="match status" value="1"/>
</dbReference>
<dbReference type="SUPFAM" id="SSF69765">
    <property type="entry name" value="IpsF-like"/>
    <property type="match status" value="1"/>
</dbReference>
<dbReference type="PROSITE" id="PS01350">
    <property type="entry name" value="ISPF"/>
    <property type="match status" value="1"/>
</dbReference>
<accession>B8D9J7</accession>
<proteinExistence type="inferred from homology"/>
<organism>
    <name type="scientific">Buchnera aphidicola subsp. Acyrthosiphon pisum (strain 5A)</name>
    <dbReference type="NCBI Taxonomy" id="563178"/>
    <lineage>
        <taxon>Bacteria</taxon>
        <taxon>Pseudomonadati</taxon>
        <taxon>Pseudomonadota</taxon>
        <taxon>Gammaproteobacteria</taxon>
        <taxon>Enterobacterales</taxon>
        <taxon>Erwiniaceae</taxon>
        <taxon>Buchnera</taxon>
    </lineage>
</organism>
<gene>
    <name evidence="1" type="primary">ispF</name>
    <name type="ordered locus">BUAP5A_412</name>
</gene>
<sequence length="161" mass="17920">MRIGYGFDLHAFGSTKPLIIGGVLIPCEKGLIAHSNGDLLIHSLIDALLGATAMGDIGSFFPSNNYIYKNIDSRILLKKIWNKIILLNYDICNIDITIIAEYPKMLPYIFFMRSNLSLDLNTEIDNISIKSTTSKKIGCIGRKEAIACHSIVMLIKNKKCI</sequence>
<keyword id="KW-0414">Isoprene biosynthesis</keyword>
<keyword id="KW-0456">Lyase</keyword>
<keyword id="KW-0479">Metal-binding</keyword>
<feature type="chain" id="PRO_1000118997" description="2-C-methyl-D-erythritol 2,4-cyclodiphosphate synthase">
    <location>
        <begin position="1"/>
        <end position="161"/>
    </location>
</feature>
<feature type="binding site" evidence="1">
    <location>
        <begin position="8"/>
        <end position="10"/>
    </location>
    <ligand>
        <name>4-CDP-2-C-methyl-D-erythritol 2-phosphate</name>
        <dbReference type="ChEBI" id="CHEBI:57919"/>
    </ligand>
</feature>
<feature type="binding site" evidence="1">
    <location>
        <position position="8"/>
    </location>
    <ligand>
        <name>a divalent metal cation</name>
        <dbReference type="ChEBI" id="CHEBI:60240"/>
    </ligand>
</feature>
<feature type="binding site" evidence="1">
    <location>
        <position position="10"/>
    </location>
    <ligand>
        <name>a divalent metal cation</name>
        <dbReference type="ChEBI" id="CHEBI:60240"/>
    </ligand>
</feature>
<feature type="binding site" evidence="1">
    <location>
        <begin position="34"/>
        <end position="35"/>
    </location>
    <ligand>
        <name>4-CDP-2-C-methyl-D-erythritol 2-phosphate</name>
        <dbReference type="ChEBI" id="CHEBI:57919"/>
    </ligand>
</feature>
<feature type="binding site" evidence="1">
    <location>
        <position position="42"/>
    </location>
    <ligand>
        <name>a divalent metal cation</name>
        <dbReference type="ChEBI" id="CHEBI:60240"/>
    </ligand>
</feature>
<feature type="binding site" evidence="1">
    <location>
        <begin position="56"/>
        <end position="58"/>
    </location>
    <ligand>
        <name>4-CDP-2-C-methyl-D-erythritol 2-phosphate</name>
        <dbReference type="ChEBI" id="CHEBI:57919"/>
    </ligand>
</feature>
<feature type="binding site" evidence="1">
    <location>
        <begin position="100"/>
        <end position="106"/>
    </location>
    <ligand>
        <name>4-CDP-2-C-methyl-D-erythritol 2-phosphate</name>
        <dbReference type="ChEBI" id="CHEBI:57919"/>
    </ligand>
</feature>
<feature type="binding site" evidence="1">
    <location>
        <position position="142"/>
    </location>
    <ligand>
        <name>4-CDP-2-C-methyl-D-erythritol 2-phosphate</name>
        <dbReference type="ChEBI" id="CHEBI:57919"/>
    </ligand>
</feature>
<feature type="site" description="Transition state stabilizer" evidence="1">
    <location>
        <position position="34"/>
    </location>
</feature>
<feature type="site" description="Transition state stabilizer" evidence="1">
    <location>
        <position position="133"/>
    </location>
</feature>
<comment type="function">
    <text evidence="1">Involved in the biosynthesis of isopentenyl diphosphate (IPP) and dimethylallyl diphosphate (DMAPP), two major building blocks of isoprenoid compounds. Catalyzes the conversion of 4-diphosphocytidyl-2-C-methyl-D-erythritol 2-phosphate (CDP-ME2P) to 2-C-methyl-D-erythritol 2,4-cyclodiphosphate (ME-CPP) with a corresponding release of cytidine 5-monophosphate (CMP).</text>
</comment>
<comment type="catalytic activity">
    <reaction evidence="1">
        <text>4-CDP-2-C-methyl-D-erythritol 2-phosphate = 2-C-methyl-D-erythritol 2,4-cyclic diphosphate + CMP</text>
        <dbReference type="Rhea" id="RHEA:23864"/>
        <dbReference type="ChEBI" id="CHEBI:57919"/>
        <dbReference type="ChEBI" id="CHEBI:58483"/>
        <dbReference type="ChEBI" id="CHEBI:60377"/>
        <dbReference type="EC" id="4.6.1.12"/>
    </reaction>
</comment>
<comment type="cofactor">
    <cofactor evidence="1">
        <name>a divalent metal cation</name>
        <dbReference type="ChEBI" id="CHEBI:60240"/>
    </cofactor>
    <text evidence="1">Binds 1 divalent metal cation per subunit.</text>
</comment>
<comment type="pathway">
    <text evidence="1">Isoprenoid biosynthesis; isopentenyl diphosphate biosynthesis via DXP pathway; isopentenyl diphosphate from 1-deoxy-D-xylulose 5-phosphate: step 4/6.</text>
</comment>
<comment type="subunit">
    <text evidence="1">Homotrimer.</text>
</comment>
<comment type="similarity">
    <text evidence="1">Belongs to the IspF family.</text>
</comment>
<name>ISPF_BUCA5</name>
<evidence type="ECO:0000255" key="1">
    <source>
        <dbReference type="HAMAP-Rule" id="MF_00107"/>
    </source>
</evidence>
<protein>
    <recommendedName>
        <fullName evidence="1">2-C-methyl-D-erythritol 2,4-cyclodiphosphate synthase</fullName>
        <shortName evidence="1">MECDP-synthase</shortName>
        <shortName evidence="1">MECPP-synthase</shortName>
        <shortName evidence="1">MECPS</shortName>
        <ecNumber evidence="1">4.6.1.12</ecNumber>
    </recommendedName>
</protein>